<organism>
    <name type="scientific">Rhizobium meliloti (strain 1021)</name>
    <name type="common">Ensifer meliloti</name>
    <name type="synonym">Sinorhizobium meliloti</name>
    <dbReference type="NCBI Taxonomy" id="266834"/>
    <lineage>
        <taxon>Bacteria</taxon>
        <taxon>Pseudomonadati</taxon>
        <taxon>Pseudomonadota</taxon>
        <taxon>Alphaproteobacteria</taxon>
        <taxon>Hyphomicrobiales</taxon>
        <taxon>Rhizobiaceae</taxon>
        <taxon>Sinorhizobium/Ensifer group</taxon>
        <taxon>Sinorhizobium</taxon>
    </lineage>
</organism>
<keyword id="KW-0012">Acyltransferase</keyword>
<keyword id="KW-0028">Amino-acid biosynthesis</keyword>
<keyword id="KW-0963">Cytoplasm</keyword>
<keyword id="KW-0220">Diaminopimelate biosynthesis</keyword>
<keyword id="KW-0457">Lysine biosynthesis</keyword>
<keyword id="KW-1185">Reference proteome</keyword>
<keyword id="KW-0677">Repeat</keyword>
<keyword id="KW-0808">Transferase</keyword>
<gene>
    <name evidence="1" type="primary">dapD</name>
    <name type="ordered locus">R00433</name>
    <name type="ORF">SMc01732</name>
</gene>
<protein>
    <recommendedName>
        <fullName evidence="1">2,3,4,5-tetrahydropyridine-2,6-dicarboxylate N-succinyltransferase</fullName>
        <ecNumber evidence="1">2.3.1.117</ecNumber>
    </recommendedName>
    <alternativeName>
        <fullName evidence="1">Tetrahydrodipicolinate N-succinyltransferase</fullName>
        <shortName evidence="1">THDP succinyltransferase</shortName>
        <shortName evidence="1">THP succinyltransferase</shortName>
        <shortName evidence="1">Tetrahydropicolinate succinylase</shortName>
    </alternativeName>
</protein>
<evidence type="ECO:0000255" key="1">
    <source>
        <dbReference type="HAMAP-Rule" id="MF_00811"/>
    </source>
</evidence>
<evidence type="ECO:0000305" key="2"/>
<dbReference type="EC" id="2.3.1.117" evidence="1"/>
<dbReference type="EMBL" id="AL591688">
    <property type="protein sequence ID" value="CAC41870.1"/>
    <property type="status" value="ALT_INIT"/>
    <property type="molecule type" value="Genomic_DNA"/>
</dbReference>
<dbReference type="RefSeq" id="NP_384539.3">
    <property type="nucleotide sequence ID" value="NC_003047.1"/>
</dbReference>
<dbReference type="RefSeq" id="WP_003527620.1">
    <property type="nucleotide sequence ID" value="NC_003047.1"/>
</dbReference>
<dbReference type="SMR" id="Q92SG5"/>
<dbReference type="EnsemblBacteria" id="CAC41870">
    <property type="protein sequence ID" value="CAC41870"/>
    <property type="gene ID" value="SMc01732"/>
</dbReference>
<dbReference type="GeneID" id="89574761"/>
<dbReference type="KEGG" id="sme:SMc01732"/>
<dbReference type="PATRIC" id="fig|266834.11.peg.1806"/>
<dbReference type="eggNOG" id="COG2171">
    <property type="taxonomic scope" value="Bacteria"/>
</dbReference>
<dbReference type="HOGENOM" id="CLU_050859_0_1_5"/>
<dbReference type="OrthoDB" id="9775362at2"/>
<dbReference type="UniPathway" id="UPA00034">
    <property type="reaction ID" value="UER00019"/>
</dbReference>
<dbReference type="Proteomes" id="UP000001976">
    <property type="component" value="Chromosome"/>
</dbReference>
<dbReference type="GO" id="GO:0005737">
    <property type="term" value="C:cytoplasm"/>
    <property type="evidence" value="ECO:0007669"/>
    <property type="project" value="UniProtKB-SubCell"/>
</dbReference>
<dbReference type="GO" id="GO:0008666">
    <property type="term" value="F:2,3,4,5-tetrahydropyridine-2,6-dicarboxylate N-succinyltransferase activity"/>
    <property type="evidence" value="ECO:0007669"/>
    <property type="project" value="UniProtKB-UniRule"/>
</dbReference>
<dbReference type="GO" id="GO:0019877">
    <property type="term" value="P:diaminopimelate biosynthetic process"/>
    <property type="evidence" value="ECO:0007669"/>
    <property type="project" value="UniProtKB-UniRule"/>
</dbReference>
<dbReference type="GO" id="GO:0009089">
    <property type="term" value="P:lysine biosynthetic process via diaminopimelate"/>
    <property type="evidence" value="ECO:0007669"/>
    <property type="project" value="UniProtKB-UniRule"/>
</dbReference>
<dbReference type="CDD" id="cd03350">
    <property type="entry name" value="LbH_THP_succinylT"/>
    <property type="match status" value="1"/>
</dbReference>
<dbReference type="Gene3D" id="2.160.10.10">
    <property type="entry name" value="Hexapeptide repeat proteins"/>
    <property type="match status" value="1"/>
</dbReference>
<dbReference type="Gene3D" id="1.10.166.10">
    <property type="entry name" value="Tetrahydrodipicolinate-N-succinyltransferase, N-terminal domain"/>
    <property type="match status" value="1"/>
</dbReference>
<dbReference type="HAMAP" id="MF_00811">
    <property type="entry name" value="DapD"/>
    <property type="match status" value="1"/>
</dbReference>
<dbReference type="InterPro" id="IPR005664">
    <property type="entry name" value="DapD_Trfase_Hexpep_rpt_fam"/>
</dbReference>
<dbReference type="InterPro" id="IPR001451">
    <property type="entry name" value="Hexapep"/>
</dbReference>
<dbReference type="InterPro" id="IPR018357">
    <property type="entry name" value="Hexapep_transf_CS"/>
</dbReference>
<dbReference type="InterPro" id="IPR023180">
    <property type="entry name" value="THP_succinylTrfase_dom1"/>
</dbReference>
<dbReference type="InterPro" id="IPR037133">
    <property type="entry name" value="THP_succinylTrfase_N_sf"/>
</dbReference>
<dbReference type="InterPro" id="IPR050179">
    <property type="entry name" value="Trans_hexapeptide_repeat"/>
</dbReference>
<dbReference type="InterPro" id="IPR011004">
    <property type="entry name" value="Trimer_LpxA-like_sf"/>
</dbReference>
<dbReference type="NCBIfam" id="TIGR00965">
    <property type="entry name" value="dapD"/>
    <property type="match status" value="1"/>
</dbReference>
<dbReference type="NCBIfam" id="NF008808">
    <property type="entry name" value="PRK11830.1"/>
    <property type="match status" value="1"/>
</dbReference>
<dbReference type="PANTHER" id="PTHR43300:SF10">
    <property type="entry name" value="2,3,4,5-TETRAHYDROPYRIDINE-2,6-DICARBOXYLATE N-ACETYLTRANSFERASE"/>
    <property type="match status" value="1"/>
</dbReference>
<dbReference type="PANTHER" id="PTHR43300">
    <property type="entry name" value="ACETYLTRANSFERASE"/>
    <property type="match status" value="1"/>
</dbReference>
<dbReference type="Pfam" id="PF14602">
    <property type="entry name" value="Hexapep_2"/>
    <property type="match status" value="1"/>
</dbReference>
<dbReference type="Pfam" id="PF14805">
    <property type="entry name" value="THDPS_N_2"/>
    <property type="match status" value="1"/>
</dbReference>
<dbReference type="SUPFAM" id="SSF51161">
    <property type="entry name" value="Trimeric LpxA-like enzymes"/>
    <property type="match status" value="1"/>
</dbReference>
<dbReference type="PROSITE" id="PS00101">
    <property type="entry name" value="HEXAPEP_TRANSFERASES"/>
    <property type="match status" value="1"/>
</dbReference>
<name>DAPD_RHIME</name>
<proteinExistence type="inferred from homology"/>
<comment type="catalytic activity">
    <reaction evidence="1">
        <text>(S)-2,3,4,5-tetrahydrodipicolinate + succinyl-CoA + H2O = (S)-2-succinylamino-6-oxoheptanedioate + CoA</text>
        <dbReference type="Rhea" id="RHEA:17325"/>
        <dbReference type="ChEBI" id="CHEBI:15377"/>
        <dbReference type="ChEBI" id="CHEBI:15685"/>
        <dbReference type="ChEBI" id="CHEBI:16845"/>
        <dbReference type="ChEBI" id="CHEBI:57287"/>
        <dbReference type="ChEBI" id="CHEBI:57292"/>
        <dbReference type="EC" id="2.3.1.117"/>
    </reaction>
</comment>
<comment type="pathway">
    <text evidence="1">Amino-acid biosynthesis; L-lysine biosynthesis via DAP pathway; LL-2,6-diaminopimelate from (S)-tetrahydrodipicolinate (succinylase route): step 1/3.</text>
</comment>
<comment type="subunit">
    <text evidence="1">Homotrimer.</text>
</comment>
<comment type="subcellular location">
    <subcellularLocation>
        <location evidence="1">Cytoplasm</location>
    </subcellularLocation>
</comment>
<comment type="similarity">
    <text evidence="1">Belongs to the transferase hexapeptide repeat family.</text>
</comment>
<comment type="sequence caution" evidence="2">
    <conflict type="erroneous initiation">
        <sequence resource="EMBL-CDS" id="CAC41870"/>
    </conflict>
</comment>
<feature type="chain" id="PRO_0000196960" description="2,3,4,5-tetrahydropyridine-2,6-dicarboxylate N-succinyltransferase">
    <location>
        <begin position="1"/>
        <end position="285"/>
    </location>
</feature>
<feature type="binding site" evidence="1">
    <location>
        <position position="111"/>
    </location>
    <ligand>
        <name>substrate</name>
    </ligand>
</feature>
<feature type="binding site" evidence="1">
    <location>
        <position position="148"/>
    </location>
    <ligand>
        <name>substrate</name>
    </ligand>
</feature>
<reference key="1">
    <citation type="journal article" date="2001" name="Proc. Natl. Acad. Sci. U.S.A.">
        <title>Analysis of the chromosome sequence of the legume symbiont Sinorhizobium meliloti strain 1021.</title>
        <authorList>
            <person name="Capela D."/>
            <person name="Barloy-Hubler F."/>
            <person name="Gouzy J."/>
            <person name="Bothe G."/>
            <person name="Ampe F."/>
            <person name="Batut J."/>
            <person name="Boistard P."/>
            <person name="Becker A."/>
            <person name="Boutry M."/>
            <person name="Cadieu E."/>
            <person name="Dreano S."/>
            <person name="Gloux S."/>
            <person name="Godrie T."/>
            <person name="Goffeau A."/>
            <person name="Kahn D."/>
            <person name="Kiss E."/>
            <person name="Lelaure V."/>
            <person name="Masuy D."/>
            <person name="Pohl T."/>
            <person name="Portetelle D."/>
            <person name="Puehler A."/>
            <person name="Purnelle B."/>
            <person name="Ramsperger U."/>
            <person name="Renard C."/>
            <person name="Thebault P."/>
            <person name="Vandenbol M."/>
            <person name="Weidner S."/>
            <person name="Galibert F."/>
        </authorList>
    </citation>
    <scope>NUCLEOTIDE SEQUENCE [LARGE SCALE GENOMIC DNA]</scope>
    <source>
        <strain>1021</strain>
    </source>
</reference>
<reference key="2">
    <citation type="journal article" date="2001" name="Science">
        <title>The composite genome of the legume symbiont Sinorhizobium meliloti.</title>
        <authorList>
            <person name="Galibert F."/>
            <person name="Finan T.M."/>
            <person name="Long S.R."/>
            <person name="Puehler A."/>
            <person name="Abola P."/>
            <person name="Ampe F."/>
            <person name="Barloy-Hubler F."/>
            <person name="Barnett M.J."/>
            <person name="Becker A."/>
            <person name="Boistard P."/>
            <person name="Bothe G."/>
            <person name="Boutry M."/>
            <person name="Bowser L."/>
            <person name="Buhrmester J."/>
            <person name="Cadieu E."/>
            <person name="Capela D."/>
            <person name="Chain P."/>
            <person name="Cowie A."/>
            <person name="Davis R.W."/>
            <person name="Dreano S."/>
            <person name="Federspiel N.A."/>
            <person name="Fisher R.F."/>
            <person name="Gloux S."/>
            <person name="Godrie T."/>
            <person name="Goffeau A."/>
            <person name="Golding B."/>
            <person name="Gouzy J."/>
            <person name="Gurjal M."/>
            <person name="Hernandez-Lucas I."/>
            <person name="Hong A."/>
            <person name="Huizar L."/>
            <person name="Hyman R.W."/>
            <person name="Jones T."/>
            <person name="Kahn D."/>
            <person name="Kahn M.L."/>
            <person name="Kalman S."/>
            <person name="Keating D.H."/>
            <person name="Kiss E."/>
            <person name="Komp C."/>
            <person name="Lelaure V."/>
            <person name="Masuy D."/>
            <person name="Palm C."/>
            <person name="Peck M.C."/>
            <person name="Pohl T.M."/>
            <person name="Portetelle D."/>
            <person name="Purnelle B."/>
            <person name="Ramsperger U."/>
            <person name="Surzycki R."/>
            <person name="Thebault P."/>
            <person name="Vandenbol M."/>
            <person name="Vorhoelter F.J."/>
            <person name="Weidner S."/>
            <person name="Wells D.H."/>
            <person name="Wong K."/>
            <person name="Yeh K.-C."/>
            <person name="Batut J."/>
        </authorList>
    </citation>
    <scope>NUCLEOTIDE SEQUENCE [LARGE SCALE GENOMIC DNA]</scope>
    <source>
        <strain>1021</strain>
    </source>
</reference>
<accession>Q92SG5</accession>
<sequence length="285" mass="30345">MTNHDLASLSQTIETAFEGRDAVNTGTRGAVRDAVETALNLLDSGKVRVAERSEDGTWTVNQWLKKAVLLSFRLNPMELVRGGPGEAVWWDKVASKFDGWSVNEFEKAGFRAVPNCVVRRSAYIAPNAVLMPSFVNLGAYVGEGTMVDTWATVGSCAQIGKNVHLSGGVGIGGVLEPMQAGPTIIEDNCFIGARSEVVEGCIVREGSVLGMGVFIGKSTKIVDRATGEVMYGEVPPYSVVVAGSMASGSTMANGQPAPNLYCAVIVKRVDEKTRSKTGINELLRD</sequence>